<feature type="chain" id="PRO_0000298773" description="30 kDa antifungal protein">
    <location>
        <begin position="1"/>
        <end position="18" status="greater than"/>
    </location>
</feature>
<feature type="non-terminal residue" evidence="2">
    <location>
        <position position="18"/>
    </location>
</feature>
<comment type="function">
    <text evidence="1">Has antifungal activity against the plant fungal pathogens G.graminis, P.infestans, P.megasperma and S.sclerotiorum. Does not have antifungal activity against the human pathogen C.albicans. Does not have ribonuclease activity.</text>
</comment>
<comment type="biophysicochemical properties">
    <temperatureDependence>
        <text evidence="1">Thermostable.</text>
    </temperatureDependence>
</comment>
<comment type="tissue specificity">
    <text evidence="1">Leaves.</text>
</comment>
<comment type="developmental stage">
    <text evidence="1">Expressed in young plants, no expression in mature plants.</text>
</comment>
<comment type="miscellaneous">
    <text>Resistant to heat and proteolysis.</text>
</comment>
<name>AFP_ENGPE</name>
<dbReference type="PIR" id="S70611">
    <property type="entry name" value="S70611"/>
</dbReference>
<dbReference type="GO" id="GO:0050832">
    <property type="term" value="P:defense response to fungus"/>
    <property type="evidence" value="ECO:0007669"/>
    <property type="project" value="UniProtKB-KW"/>
</dbReference>
<dbReference type="GO" id="GO:0031640">
    <property type="term" value="P:killing of cells of another organism"/>
    <property type="evidence" value="ECO:0007669"/>
    <property type="project" value="UniProtKB-KW"/>
</dbReference>
<evidence type="ECO:0000269" key="1">
    <source>
    </source>
</evidence>
<evidence type="ECO:0000303" key="2">
    <source>
    </source>
</evidence>
<evidence type="ECO:0000305" key="3"/>
<sequence>XXTKFDFFTLALQXPAXF</sequence>
<reference evidence="3" key="1">
    <citation type="journal article" date="1996" name="Biochem. J.">
        <title>Isolation and characterization of a 30 kDa protein with antifungal activity from leaves of Engelmannia pinnatifida.</title>
        <authorList>
            <person name="Huynh Q.K."/>
            <person name="Borgmeyer J.R."/>
            <person name="Smith C.E."/>
            <person name="Bell L.D."/>
            <person name="Shah D.M."/>
        </authorList>
    </citation>
    <scope>PROTEIN SEQUENCE</scope>
    <scope>FUNCTION</scope>
    <scope>RESISTANCE TO HEAT AND PROTEOLYSIS</scope>
    <scope>TISSUE SPECIFICITY</scope>
    <scope>DEVELOPMENTAL STAGE</scope>
    <source>
        <tissue evidence="1">Leaf</tissue>
    </source>
</reference>
<accession>Q10722</accession>
<organism>
    <name type="scientific">Engelmannia peristenia</name>
    <name type="common">Engelmann's daisy</name>
    <name type="synonym">Engelmannia pinnatifida</name>
    <dbReference type="NCBI Taxonomy" id="53580"/>
    <lineage>
        <taxon>Eukaryota</taxon>
        <taxon>Viridiplantae</taxon>
        <taxon>Streptophyta</taxon>
        <taxon>Embryophyta</taxon>
        <taxon>Tracheophyta</taxon>
        <taxon>Spermatophyta</taxon>
        <taxon>Magnoliopsida</taxon>
        <taxon>eudicotyledons</taxon>
        <taxon>Gunneridae</taxon>
        <taxon>Pentapetalae</taxon>
        <taxon>asterids</taxon>
        <taxon>campanulids</taxon>
        <taxon>Asterales</taxon>
        <taxon>Asteraceae</taxon>
        <taxon>Asteroideae</taxon>
        <taxon>Heliantheae alliance</taxon>
        <taxon>Heliantheae</taxon>
        <taxon>Engelmannia</taxon>
    </lineage>
</organism>
<proteinExistence type="evidence at protein level"/>
<keyword id="KW-0929">Antimicrobial</keyword>
<keyword id="KW-0903">Direct protein sequencing</keyword>
<keyword id="KW-0295">Fungicide</keyword>
<protein>
    <recommendedName>
        <fullName>30 kDa antifungal protein</fullName>
    </recommendedName>
</protein>